<organism>
    <name type="scientific">Klebsiella pneumoniae (strain 342)</name>
    <dbReference type="NCBI Taxonomy" id="507522"/>
    <lineage>
        <taxon>Bacteria</taxon>
        <taxon>Pseudomonadati</taxon>
        <taxon>Pseudomonadota</taxon>
        <taxon>Gammaproteobacteria</taxon>
        <taxon>Enterobacterales</taxon>
        <taxon>Enterobacteriaceae</taxon>
        <taxon>Klebsiella/Raoultella group</taxon>
        <taxon>Klebsiella</taxon>
        <taxon>Klebsiella pneumoniae complex</taxon>
    </lineage>
</organism>
<sequence length="305" mass="34045">MIKQRTLKRIVQATGVGLHTGKKVTLTLRPAPANTGVIYRRTDLNPPVDFPADAKSVRDTMLCTCLVNEHDVRISTVEHLNAALAGLGIDNIIVEVDAPEIPIMDGSAAPFVYLLLDAGINELNCAKKFVRIKETVRVEDGDKWAEFKPYNGFSLDFTIDFNHPAIDASTQRYTLNFSADAFMRQISRARTFGFMRDIEYLQSRGLCLGGSFDCAIVVDDYRVLNEDGLRFEDEFVRHKMLDAIGDLFMCGHNIIGAFTAYKSGHALNNKLLQAVLAKQEAWEYVTFEDDAKLPMAFRAPSMVLA</sequence>
<keyword id="KW-0378">Hydrolase</keyword>
<keyword id="KW-0441">Lipid A biosynthesis</keyword>
<keyword id="KW-0444">Lipid biosynthesis</keyword>
<keyword id="KW-0443">Lipid metabolism</keyword>
<keyword id="KW-0479">Metal-binding</keyword>
<keyword id="KW-0862">Zinc</keyword>
<feature type="chain" id="PRO_1000122796" description="UDP-3-O-acyl-N-acetylglucosamine deacetylase">
    <location>
        <begin position="1"/>
        <end position="305"/>
    </location>
</feature>
<feature type="active site" description="Proton donor" evidence="1">
    <location>
        <position position="265"/>
    </location>
</feature>
<feature type="binding site" evidence="1">
    <location>
        <position position="79"/>
    </location>
    <ligand>
        <name>Zn(2+)</name>
        <dbReference type="ChEBI" id="CHEBI:29105"/>
    </ligand>
</feature>
<feature type="binding site" evidence="1">
    <location>
        <position position="238"/>
    </location>
    <ligand>
        <name>Zn(2+)</name>
        <dbReference type="ChEBI" id="CHEBI:29105"/>
    </ligand>
</feature>
<feature type="binding site" evidence="1">
    <location>
        <position position="242"/>
    </location>
    <ligand>
        <name>Zn(2+)</name>
        <dbReference type="ChEBI" id="CHEBI:29105"/>
    </ligand>
</feature>
<gene>
    <name evidence="1" type="primary">lpxC</name>
    <name type="ordered locus">KPK_4641</name>
</gene>
<protein>
    <recommendedName>
        <fullName evidence="1">UDP-3-O-acyl-N-acetylglucosamine deacetylase</fullName>
        <shortName evidence="1">UDP-3-O-acyl-GlcNAc deacetylase</shortName>
        <ecNumber evidence="1">3.5.1.108</ecNumber>
    </recommendedName>
    <alternativeName>
        <fullName evidence="1">UDP-3-O-[R-3-hydroxymyristoyl]-N-acetylglucosamine deacetylase</fullName>
    </alternativeName>
</protein>
<proteinExistence type="inferred from homology"/>
<accession>B5Y1U1</accession>
<name>LPXC_KLEP3</name>
<evidence type="ECO:0000255" key="1">
    <source>
        <dbReference type="HAMAP-Rule" id="MF_00388"/>
    </source>
</evidence>
<comment type="function">
    <text evidence="1">Catalyzes the hydrolysis of UDP-3-O-myristoyl-N-acetylglucosamine to form UDP-3-O-myristoylglucosamine and acetate, the committed step in lipid A biosynthesis.</text>
</comment>
<comment type="catalytic activity">
    <reaction evidence="1">
        <text>a UDP-3-O-[(3R)-3-hydroxyacyl]-N-acetyl-alpha-D-glucosamine + H2O = a UDP-3-O-[(3R)-3-hydroxyacyl]-alpha-D-glucosamine + acetate</text>
        <dbReference type="Rhea" id="RHEA:67816"/>
        <dbReference type="ChEBI" id="CHEBI:15377"/>
        <dbReference type="ChEBI" id="CHEBI:30089"/>
        <dbReference type="ChEBI" id="CHEBI:137740"/>
        <dbReference type="ChEBI" id="CHEBI:173225"/>
        <dbReference type="EC" id="3.5.1.108"/>
    </reaction>
</comment>
<comment type="cofactor">
    <cofactor evidence="1">
        <name>Zn(2+)</name>
        <dbReference type="ChEBI" id="CHEBI:29105"/>
    </cofactor>
</comment>
<comment type="pathway">
    <text evidence="1">Glycolipid biosynthesis; lipid IV(A) biosynthesis; lipid IV(A) from (3R)-3-hydroxytetradecanoyl-[acyl-carrier-protein] and UDP-N-acetyl-alpha-D-glucosamine: step 2/6.</text>
</comment>
<comment type="similarity">
    <text evidence="1">Belongs to the LpxC family.</text>
</comment>
<dbReference type="EC" id="3.5.1.108" evidence="1"/>
<dbReference type="EMBL" id="CP000964">
    <property type="protein sequence ID" value="ACI07789.1"/>
    <property type="molecule type" value="Genomic_DNA"/>
</dbReference>
<dbReference type="SMR" id="B5Y1U1"/>
<dbReference type="KEGG" id="kpe:KPK_4641"/>
<dbReference type="HOGENOM" id="CLU_046528_1_0_6"/>
<dbReference type="UniPathway" id="UPA00359">
    <property type="reaction ID" value="UER00478"/>
</dbReference>
<dbReference type="Proteomes" id="UP000001734">
    <property type="component" value="Chromosome"/>
</dbReference>
<dbReference type="GO" id="GO:0016020">
    <property type="term" value="C:membrane"/>
    <property type="evidence" value="ECO:0007669"/>
    <property type="project" value="GOC"/>
</dbReference>
<dbReference type="GO" id="GO:0046872">
    <property type="term" value="F:metal ion binding"/>
    <property type="evidence" value="ECO:0007669"/>
    <property type="project" value="UniProtKB-KW"/>
</dbReference>
<dbReference type="GO" id="GO:0103117">
    <property type="term" value="F:UDP-3-O-acyl-N-acetylglucosamine deacetylase activity"/>
    <property type="evidence" value="ECO:0007669"/>
    <property type="project" value="UniProtKB-UniRule"/>
</dbReference>
<dbReference type="GO" id="GO:0009245">
    <property type="term" value="P:lipid A biosynthetic process"/>
    <property type="evidence" value="ECO:0007669"/>
    <property type="project" value="UniProtKB-UniRule"/>
</dbReference>
<dbReference type="FunFam" id="3.30.1700.10:FF:000001">
    <property type="entry name" value="UDP-3-O-acyl-N-acetylglucosamine deacetylase"/>
    <property type="match status" value="1"/>
</dbReference>
<dbReference type="FunFam" id="3.30.230.20:FF:000001">
    <property type="entry name" value="UDP-3-O-acyl-N-acetylglucosamine deacetylase"/>
    <property type="match status" value="1"/>
</dbReference>
<dbReference type="Gene3D" id="3.30.230.20">
    <property type="entry name" value="lpxc deacetylase, domain 1"/>
    <property type="match status" value="1"/>
</dbReference>
<dbReference type="Gene3D" id="3.30.1700.10">
    <property type="entry name" value="lpxc deacetylase, domain 2"/>
    <property type="match status" value="1"/>
</dbReference>
<dbReference type="HAMAP" id="MF_00388">
    <property type="entry name" value="LpxC"/>
    <property type="match status" value="1"/>
</dbReference>
<dbReference type="InterPro" id="IPR020568">
    <property type="entry name" value="Ribosomal_Su5_D2-typ_SF"/>
</dbReference>
<dbReference type="InterPro" id="IPR004463">
    <property type="entry name" value="UDP-acyl_GlcNac_deAcase"/>
</dbReference>
<dbReference type="InterPro" id="IPR011334">
    <property type="entry name" value="UDP-acyl_GlcNac_deAcase_C"/>
</dbReference>
<dbReference type="InterPro" id="IPR015870">
    <property type="entry name" value="UDP-acyl_N-AcGlcN_deAcase_N"/>
</dbReference>
<dbReference type="NCBIfam" id="TIGR00325">
    <property type="entry name" value="lpxC"/>
    <property type="match status" value="1"/>
</dbReference>
<dbReference type="PANTHER" id="PTHR33694">
    <property type="entry name" value="UDP-3-O-ACYL-N-ACETYLGLUCOSAMINE DEACETYLASE 1, MITOCHONDRIAL-RELATED"/>
    <property type="match status" value="1"/>
</dbReference>
<dbReference type="PANTHER" id="PTHR33694:SF1">
    <property type="entry name" value="UDP-3-O-ACYL-N-ACETYLGLUCOSAMINE DEACETYLASE 1, MITOCHONDRIAL-RELATED"/>
    <property type="match status" value="1"/>
</dbReference>
<dbReference type="Pfam" id="PF03331">
    <property type="entry name" value="LpxC"/>
    <property type="match status" value="1"/>
</dbReference>
<dbReference type="SUPFAM" id="SSF54211">
    <property type="entry name" value="Ribosomal protein S5 domain 2-like"/>
    <property type="match status" value="2"/>
</dbReference>
<reference key="1">
    <citation type="journal article" date="2008" name="PLoS Genet.">
        <title>Complete genome sequence of the N2-fixing broad host range endophyte Klebsiella pneumoniae 342 and virulence predictions verified in mice.</title>
        <authorList>
            <person name="Fouts D.E."/>
            <person name="Tyler H.L."/>
            <person name="DeBoy R.T."/>
            <person name="Daugherty S."/>
            <person name="Ren Q."/>
            <person name="Badger J.H."/>
            <person name="Durkin A.S."/>
            <person name="Huot H."/>
            <person name="Shrivastava S."/>
            <person name="Kothari S."/>
            <person name="Dodson R.J."/>
            <person name="Mohamoud Y."/>
            <person name="Khouri H."/>
            <person name="Roesch L.F.W."/>
            <person name="Krogfelt K.A."/>
            <person name="Struve C."/>
            <person name="Triplett E.W."/>
            <person name="Methe B.A."/>
        </authorList>
    </citation>
    <scope>NUCLEOTIDE SEQUENCE [LARGE SCALE GENOMIC DNA]</scope>
    <source>
        <strain>342</strain>
    </source>
</reference>